<proteinExistence type="inferred from homology"/>
<gene>
    <name evidence="1" type="primary">lipA</name>
    <name type="ordered locus">Vapar_4881</name>
</gene>
<evidence type="ECO:0000255" key="1">
    <source>
        <dbReference type="HAMAP-Rule" id="MF_00206"/>
    </source>
</evidence>
<evidence type="ECO:0000255" key="2">
    <source>
        <dbReference type="PROSITE-ProRule" id="PRU01266"/>
    </source>
</evidence>
<name>LIPA_VARPS</name>
<keyword id="KW-0004">4Fe-4S</keyword>
<keyword id="KW-0963">Cytoplasm</keyword>
<keyword id="KW-0408">Iron</keyword>
<keyword id="KW-0411">Iron-sulfur</keyword>
<keyword id="KW-0479">Metal-binding</keyword>
<keyword id="KW-0949">S-adenosyl-L-methionine</keyword>
<keyword id="KW-0808">Transferase</keyword>
<protein>
    <recommendedName>
        <fullName evidence="1">Lipoyl synthase</fullName>
        <ecNumber evidence="1">2.8.1.8</ecNumber>
    </recommendedName>
    <alternativeName>
        <fullName evidence="1">Lip-syn</fullName>
        <shortName evidence="1">LS</shortName>
    </alternativeName>
    <alternativeName>
        <fullName evidence="1">Lipoate synthase</fullName>
    </alternativeName>
    <alternativeName>
        <fullName evidence="1">Lipoic acid synthase</fullName>
    </alternativeName>
    <alternativeName>
        <fullName evidence="1">Sulfur insertion protein LipA</fullName>
    </alternativeName>
</protein>
<comment type="function">
    <text evidence="1">Catalyzes the radical-mediated insertion of two sulfur atoms into the C-6 and C-8 positions of the octanoyl moiety bound to the lipoyl domains of lipoate-dependent enzymes, thereby converting the octanoylated domains into lipoylated derivatives.</text>
</comment>
<comment type="catalytic activity">
    <reaction evidence="1">
        <text>[[Fe-S] cluster scaffold protein carrying a second [4Fe-4S](2+) cluster] + N(6)-octanoyl-L-lysyl-[protein] + 2 oxidized [2Fe-2S]-[ferredoxin] + 2 S-adenosyl-L-methionine + 4 H(+) = [[Fe-S] cluster scaffold protein] + N(6)-[(R)-dihydrolipoyl]-L-lysyl-[protein] + 4 Fe(3+) + 2 hydrogen sulfide + 2 5'-deoxyadenosine + 2 L-methionine + 2 reduced [2Fe-2S]-[ferredoxin]</text>
        <dbReference type="Rhea" id="RHEA:16585"/>
        <dbReference type="Rhea" id="RHEA-COMP:9928"/>
        <dbReference type="Rhea" id="RHEA-COMP:10000"/>
        <dbReference type="Rhea" id="RHEA-COMP:10001"/>
        <dbReference type="Rhea" id="RHEA-COMP:10475"/>
        <dbReference type="Rhea" id="RHEA-COMP:14568"/>
        <dbReference type="Rhea" id="RHEA-COMP:14569"/>
        <dbReference type="ChEBI" id="CHEBI:15378"/>
        <dbReference type="ChEBI" id="CHEBI:17319"/>
        <dbReference type="ChEBI" id="CHEBI:29034"/>
        <dbReference type="ChEBI" id="CHEBI:29919"/>
        <dbReference type="ChEBI" id="CHEBI:33722"/>
        <dbReference type="ChEBI" id="CHEBI:33737"/>
        <dbReference type="ChEBI" id="CHEBI:33738"/>
        <dbReference type="ChEBI" id="CHEBI:57844"/>
        <dbReference type="ChEBI" id="CHEBI:59789"/>
        <dbReference type="ChEBI" id="CHEBI:78809"/>
        <dbReference type="ChEBI" id="CHEBI:83100"/>
        <dbReference type="EC" id="2.8.1.8"/>
    </reaction>
</comment>
<comment type="cofactor">
    <cofactor evidence="1">
        <name>[4Fe-4S] cluster</name>
        <dbReference type="ChEBI" id="CHEBI:49883"/>
    </cofactor>
    <text evidence="1">Binds 2 [4Fe-4S] clusters per subunit. One cluster is coordinated with 3 cysteines and an exchangeable S-adenosyl-L-methionine.</text>
</comment>
<comment type="pathway">
    <text evidence="1">Protein modification; protein lipoylation via endogenous pathway; protein N(6)-(lipoyl)lysine from octanoyl-[acyl-carrier-protein]: step 2/2.</text>
</comment>
<comment type="subcellular location">
    <subcellularLocation>
        <location evidence="1">Cytoplasm</location>
    </subcellularLocation>
</comment>
<comment type="similarity">
    <text evidence="1">Belongs to the radical SAM superfamily. Lipoyl synthase family.</text>
</comment>
<organism>
    <name type="scientific">Variovorax paradoxus (strain S110)</name>
    <dbReference type="NCBI Taxonomy" id="543728"/>
    <lineage>
        <taxon>Bacteria</taxon>
        <taxon>Pseudomonadati</taxon>
        <taxon>Pseudomonadota</taxon>
        <taxon>Betaproteobacteria</taxon>
        <taxon>Burkholderiales</taxon>
        <taxon>Comamonadaceae</taxon>
        <taxon>Variovorax</taxon>
    </lineage>
</organism>
<feature type="chain" id="PRO_1000204159" description="Lipoyl synthase">
    <location>
        <begin position="1"/>
        <end position="327"/>
    </location>
</feature>
<feature type="domain" description="Radical SAM core" evidence="2">
    <location>
        <begin position="87"/>
        <end position="304"/>
    </location>
</feature>
<feature type="binding site" evidence="1">
    <location>
        <position position="75"/>
    </location>
    <ligand>
        <name>[4Fe-4S] cluster</name>
        <dbReference type="ChEBI" id="CHEBI:49883"/>
        <label>1</label>
    </ligand>
</feature>
<feature type="binding site" evidence="1">
    <location>
        <position position="80"/>
    </location>
    <ligand>
        <name>[4Fe-4S] cluster</name>
        <dbReference type="ChEBI" id="CHEBI:49883"/>
        <label>1</label>
    </ligand>
</feature>
<feature type="binding site" evidence="1">
    <location>
        <position position="86"/>
    </location>
    <ligand>
        <name>[4Fe-4S] cluster</name>
        <dbReference type="ChEBI" id="CHEBI:49883"/>
        <label>1</label>
    </ligand>
</feature>
<feature type="binding site" evidence="1">
    <location>
        <position position="101"/>
    </location>
    <ligand>
        <name>[4Fe-4S] cluster</name>
        <dbReference type="ChEBI" id="CHEBI:49883"/>
        <label>2</label>
        <note>4Fe-4S-S-AdoMet</note>
    </ligand>
</feature>
<feature type="binding site" evidence="1">
    <location>
        <position position="105"/>
    </location>
    <ligand>
        <name>[4Fe-4S] cluster</name>
        <dbReference type="ChEBI" id="CHEBI:49883"/>
        <label>2</label>
        <note>4Fe-4S-S-AdoMet</note>
    </ligand>
</feature>
<feature type="binding site" evidence="1">
    <location>
        <position position="108"/>
    </location>
    <ligand>
        <name>[4Fe-4S] cluster</name>
        <dbReference type="ChEBI" id="CHEBI:49883"/>
        <label>2</label>
        <note>4Fe-4S-S-AdoMet</note>
    </ligand>
</feature>
<feature type="binding site" evidence="1">
    <location>
        <position position="315"/>
    </location>
    <ligand>
        <name>[4Fe-4S] cluster</name>
        <dbReference type="ChEBI" id="CHEBI:49883"/>
        <label>1</label>
    </ligand>
</feature>
<accession>C5CP21</accession>
<dbReference type="EC" id="2.8.1.8" evidence="1"/>
<dbReference type="EMBL" id="CP001635">
    <property type="protein sequence ID" value="ACS21485.1"/>
    <property type="molecule type" value="Genomic_DNA"/>
</dbReference>
<dbReference type="SMR" id="C5CP21"/>
<dbReference type="STRING" id="543728.Vapar_4881"/>
<dbReference type="KEGG" id="vap:Vapar_4881"/>
<dbReference type="eggNOG" id="COG0320">
    <property type="taxonomic scope" value="Bacteria"/>
</dbReference>
<dbReference type="HOGENOM" id="CLU_033144_2_1_4"/>
<dbReference type="OrthoDB" id="9787898at2"/>
<dbReference type="UniPathway" id="UPA00538">
    <property type="reaction ID" value="UER00593"/>
</dbReference>
<dbReference type="GO" id="GO:0005737">
    <property type="term" value="C:cytoplasm"/>
    <property type="evidence" value="ECO:0007669"/>
    <property type="project" value="UniProtKB-SubCell"/>
</dbReference>
<dbReference type="GO" id="GO:0051539">
    <property type="term" value="F:4 iron, 4 sulfur cluster binding"/>
    <property type="evidence" value="ECO:0007669"/>
    <property type="project" value="UniProtKB-UniRule"/>
</dbReference>
<dbReference type="GO" id="GO:0016992">
    <property type="term" value="F:lipoate synthase activity"/>
    <property type="evidence" value="ECO:0007669"/>
    <property type="project" value="UniProtKB-UniRule"/>
</dbReference>
<dbReference type="GO" id="GO:0046872">
    <property type="term" value="F:metal ion binding"/>
    <property type="evidence" value="ECO:0007669"/>
    <property type="project" value="UniProtKB-KW"/>
</dbReference>
<dbReference type="CDD" id="cd01335">
    <property type="entry name" value="Radical_SAM"/>
    <property type="match status" value="1"/>
</dbReference>
<dbReference type="FunFam" id="3.20.20.70:FF:000040">
    <property type="entry name" value="Lipoyl synthase"/>
    <property type="match status" value="1"/>
</dbReference>
<dbReference type="Gene3D" id="3.20.20.70">
    <property type="entry name" value="Aldolase class I"/>
    <property type="match status" value="1"/>
</dbReference>
<dbReference type="HAMAP" id="MF_00206">
    <property type="entry name" value="Lipoyl_synth"/>
    <property type="match status" value="1"/>
</dbReference>
<dbReference type="InterPro" id="IPR013785">
    <property type="entry name" value="Aldolase_TIM"/>
</dbReference>
<dbReference type="InterPro" id="IPR006638">
    <property type="entry name" value="Elp3/MiaA/NifB-like_rSAM"/>
</dbReference>
<dbReference type="InterPro" id="IPR031691">
    <property type="entry name" value="LIAS_N"/>
</dbReference>
<dbReference type="InterPro" id="IPR003698">
    <property type="entry name" value="Lipoyl_synth"/>
</dbReference>
<dbReference type="InterPro" id="IPR007197">
    <property type="entry name" value="rSAM"/>
</dbReference>
<dbReference type="NCBIfam" id="TIGR00510">
    <property type="entry name" value="lipA"/>
    <property type="match status" value="1"/>
</dbReference>
<dbReference type="NCBIfam" id="NF004019">
    <property type="entry name" value="PRK05481.1"/>
    <property type="match status" value="1"/>
</dbReference>
<dbReference type="NCBIfam" id="NF009544">
    <property type="entry name" value="PRK12928.1"/>
    <property type="match status" value="1"/>
</dbReference>
<dbReference type="PANTHER" id="PTHR10949">
    <property type="entry name" value="LIPOYL SYNTHASE"/>
    <property type="match status" value="1"/>
</dbReference>
<dbReference type="PANTHER" id="PTHR10949:SF0">
    <property type="entry name" value="LIPOYL SYNTHASE, MITOCHONDRIAL"/>
    <property type="match status" value="1"/>
</dbReference>
<dbReference type="Pfam" id="PF16881">
    <property type="entry name" value="LIAS_N"/>
    <property type="match status" value="1"/>
</dbReference>
<dbReference type="Pfam" id="PF04055">
    <property type="entry name" value="Radical_SAM"/>
    <property type="match status" value="1"/>
</dbReference>
<dbReference type="PIRSF" id="PIRSF005963">
    <property type="entry name" value="Lipoyl_synth"/>
    <property type="match status" value="1"/>
</dbReference>
<dbReference type="SFLD" id="SFLDF00271">
    <property type="entry name" value="lipoyl_synthase"/>
    <property type="match status" value="1"/>
</dbReference>
<dbReference type="SFLD" id="SFLDS00029">
    <property type="entry name" value="Radical_SAM"/>
    <property type="match status" value="1"/>
</dbReference>
<dbReference type="SMART" id="SM00729">
    <property type="entry name" value="Elp3"/>
    <property type="match status" value="1"/>
</dbReference>
<dbReference type="SUPFAM" id="SSF102114">
    <property type="entry name" value="Radical SAM enzymes"/>
    <property type="match status" value="1"/>
</dbReference>
<dbReference type="PROSITE" id="PS51918">
    <property type="entry name" value="RADICAL_SAM"/>
    <property type="match status" value="1"/>
</dbReference>
<reference key="1">
    <citation type="journal article" date="2011" name="J. Bacteriol.">
        <title>Complete genome sequence of the metabolically versatile plant growth-promoting endophyte, Variovorax paradoxus S110.</title>
        <authorList>
            <person name="Han J.I."/>
            <person name="Choi H.K."/>
            <person name="Lee S.W."/>
            <person name="Orwin P.M."/>
            <person name="Kim J."/>
            <person name="Laroe S.L."/>
            <person name="Kim T.G."/>
            <person name="O'Neil J."/>
            <person name="Leadbetter J.R."/>
            <person name="Lee S.Y."/>
            <person name="Hur C.G."/>
            <person name="Spain J.C."/>
            <person name="Ovchinnikova G."/>
            <person name="Goodwin L."/>
            <person name="Han C."/>
        </authorList>
    </citation>
    <scope>NUCLEOTIDE SEQUENCE [LARGE SCALE GENOMIC DNA]</scope>
    <source>
        <strain>S110</strain>
    </source>
</reference>
<sequence length="327" mass="36638">MSTTEVVRDAQSAENYNPLAKQKAAAKLSRIPVKVVQQGEVLKKPEWIRVKAGSPTTRFYEIKQILRESNLHTVCEEASCPNIGECFGNGTATFMIMGDKCTRRCPFCDVGHGRPDPLDKDEPLNLAKTIAKLRLKYVVITSVDRDDLRDGGSQHFVDCITNIRELSPMTQIEILVPDFRGRDDRALEILKAAPPDVMNHNLETAPRLYKEARPGSDYQFSLNLLKKFKALHPQVPTKSGIMVGLGETDEEILQVMRDMRAHDIDMLTIGQYLSPSGSHLPVRRYVHPDTFKMFEEEAYKMGFSHAAVGAMVRSSYHADQQAHAAGV</sequence>